<keyword id="KW-0028">Amino-acid biosynthesis</keyword>
<keyword id="KW-0067">ATP-binding</keyword>
<keyword id="KW-0963">Cytoplasm</keyword>
<keyword id="KW-0328">Glycosyltransferase</keyword>
<keyword id="KW-0368">Histidine biosynthesis</keyword>
<keyword id="KW-0547">Nucleotide-binding</keyword>
<keyword id="KW-0808">Transferase</keyword>
<evidence type="ECO:0000250" key="1"/>
<evidence type="ECO:0000305" key="2"/>
<name>HIS1_STAAW</name>
<proteinExistence type="inferred from homology"/>
<accession>P64350</accession>
<accession>Q99QW2</accession>
<comment type="function">
    <text evidence="1">Catalyzes the condensation of ATP and 5-phosphoribose 1-diphosphate to form N'-(5'-phosphoribosyl)-ATP (PR-ATP). Has a crucial role in the pathway because the rate of histidine biosynthesis seems to be controlled primarily by regulation of HisG enzymatic activity (By similarity).</text>
</comment>
<comment type="catalytic activity">
    <reaction>
        <text>1-(5-phospho-beta-D-ribosyl)-ATP + diphosphate = 5-phospho-alpha-D-ribose 1-diphosphate + ATP</text>
        <dbReference type="Rhea" id="RHEA:18473"/>
        <dbReference type="ChEBI" id="CHEBI:30616"/>
        <dbReference type="ChEBI" id="CHEBI:33019"/>
        <dbReference type="ChEBI" id="CHEBI:58017"/>
        <dbReference type="ChEBI" id="CHEBI:73183"/>
        <dbReference type="EC" id="2.4.2.17"/>
    </reaction>
</comment>
<comment type="pathway">
    <text>Amino-acid biosynthesis; L-histidine biosynthesis; L-histidine from 5-phospho-alpha-D-ribose 1-diphosphate: step 1/9.</text>
</comment>
<comment type="subunit">
    <text evidence="1">Heteromultimer composed of HisG and HisZ subunits.</text>
</comment>
<comment type="subcellular location">
    <subcellularLocation>
        <location evidence="1">Cytoplasm</location>
    </subcellularLocation>
</comment>
<comment type="domain">
    <text>Lacks the C-terminal regulatory region which is replaced by HisZ.</text>
</comment>
<comment type="similarity">
    <text evidence="2">Belongs to the ATP phosphoribosyltransferase family. Short subfamily.</text>
</comment>
<protein>
    <recommendedName>
        <fullName>ATP phosphoribosyltransferase</fullName>
        <shortName>ATP-PRT</shortName>
        <shortName>ATP-PRTase</shortName>
        <ecNumber>2.4.2.17</ecNumber>
    </recommendedName>
</protein>
<feature type="chain" id="PRO_0000151936" description="ATP phosphoribosyltransferase">
    <location>
        <begin position="1"/>
        <end position="204"/>
    </location>
</feature>
<sequence length="204" mass="22643">MLRIAIAKGRLMDSLINYLDVIEYTTLSETLKNRERQLLLSVDNIECILVKGSDVPIYVEQGMADIGIVGSDILDERQYNVNNLLNMPFGACHFAVAAKPETTNYRKIATSYVHTAETYFKSKGIDVELIKLNGSVELACVVDMVDGIVDIVQTGTTLKANGLVEKQHISDINARLITNKAAYFKKSQLIEQFIRSLEVSIANA</sequence>
<dbReference type="EC" id="2.4.2.17"/>
<dbReference type="EMBL" id="BA000033">
    <property type="protein sequence ID" value="BAB96463.1"/>
    <property type="molecule type" value="Genomic_DNA"/>
</dbReference>
<dbReference type="RefSeq" id="WP_000944149.1">
    <property type="nucleotide sequence ID" value="NC_003923.1"/>
</dbReference>
<dbReference type="SMR" id="P64350"/>
<dbReference type="KEGG" id="sam:MW2598"/>
<dbReference type="HOGENOM" id="CLU_038115_2_0_9"/>
<dbReference type="UniPathway" id="UPA00031">
    <property type="reaction ID" value="UER00006"/>
</dbReference>
<dbReference type="GO" id="GO:0005737">
    <property type="term" value="C:cytoplasm"/>
    <property type="evidence" value="ECO:0007669"/>
    <property type="project" value="UniProtKB-SubCell"/>
</dbReference>
<dbReference type="GO" id="GO:0005524">
    <property type="term" value="F:ATP binding"/>
    <property type="evidence" value="ECO:0007669"/>
    <property type="project" value="UniProtKB-KW"/>
</dbReference>
<dbReference type="GO" id="GO:0003879">
    <property type="term" value="F:ATP phosphoribosyltransferase activity"/>
    <property type="evidence" value="ECO:0007669"/>
    <property type="project" value="UniProtKB-UniRule"/>
</dbReference>
<dbReference type="GO" id="GO:0000105">
    <property type="term" value="P:L-histidine biosynthetic process"/>
    <property type="evidence" value="ECO:0007669"/>
    <property type="project" value="UniProtKB-UniRule"/>
</dbReference>
<dbReference type="CDD" id="cd13595">
    <property type="entry name" value="PBP2_HisGs"/>
    <property type="match status" value="1"/>
</dbReference>
<dbReference type="FunFam" id="3.40.190.10:FF:000008">
    <property type="entry name" value="ATP phosphoribosyltransferase"/>
    <property type="match status" value="1"/>
</dbReference>
<dbReference type="Gene3D" id="3.40.190.10">
    <property type="entry name" value="Periplasmic binding protein-like II"/>
    <property type="match status" value="2"/>
</dbReference>
<dbReference type="HAMAP" id="MF_01018">
    <property type="entry name" value="HisG_Short"/>
    <property type="match status" value="1"/>
</dbReference>
<dbReference type="InterPro" id="IPR013820">
    <property type="entry name" value="ATP_PRibTrfase_cat"/>
</dbReference>
<dbReference type="InterPro" id="IPR001348">
    <property type="entry name" value="ATP_PRibTrfase_HisG"/>
</dbReference>
<dbReference type="InterPro" id="IPR024893">
    <property type="entry name" value="ATP_PRibTrfase_HisG_short"/>
</dbReference>
<dbReference type="NCBIfam" id="TIGR00070">
    <property type="entry name" value="hisG"/>
    <property type="match status" value="1"/>
</dbReference>
<dbReference type="PANTHER" id="PTHR21403:SF8">
    <property type="entry name" value="ATP PHOSPHORIBOSYLTRANSFERASE"/>
    <property type="match status" value="1"/>
</dbReference>
<dbReference type="PANTHER" id="PTHR21403">
    <property type="entry name" value="ATP PHOSPHORIBOSYLTRANSFERASE ATP-PRTASE"/>
    <property type="match status" value="1"/>
</dbReference>
<dbReference type="Pfam" id="PF01634">
    <property type="entry name" value="HisG"/>
    <property type="match status" value="1"/>
</dbReference>
<dbReference type="SUPFAM" id="SSF53850">
    <property type="entry name" value="Periplasmic binding protein-like II"/>
    <property type="match status" value="1"/>
</dbReference>
<organism>
    <name type="scientific">Staphylococcus aureus (strain MW2)</name>
    <dbReference type="NCBI Taxonomy" id="196620"/>
    <lineage>
        <taxon>Bacteria</taxon>
        <taxon>Bacillati</taxon>
        <taxon>Bacillota</taxon>
        <taxon>Bacilli</taxon>
        <taxon>Bacillales</taxon>
        <taxon>Staphylococcaceae</taxon>
        <taxon>Staphylococcus</taxon>
    </lineage>
</organism>
<reference key="1">
    <citation type="journal article" date="2002" name="Lancet">
        <title>Genome and virulence determinants of high virulence community-acquired MRSA.</title>
        <authorList>
            <person name="Baba T."/>
            <person name="Takeuchi F."/>
            <person name="Kuroda M."/>
            <person name="Yuzawa H."/>
            <person name="Aoki K."/>
            <person name="Oguchi A."/>
            <person name="Nagai Y."/>
            <person name="Iwama N."/>
            <person name="Asano K."/>
            <person name="Naimi T."/>
            <person name="Kuroda H."/>
            <person name="Cui L."/>
            <person name="Yamamoto K."/>
            <person name="Hiramatsu K."/>
        </authorList>
    </citation>
    <scope>NUCLEOTIDE SEQUENCE [LARGE SCALE GENOMIC DNA]</scope>
    <source>
        <strain>MW2</strain>
    </source>
</reference>
<gene>
    <name type="primary">hisG</name>
    <name type="ordered locus">MW2598</name>
</gene>